<feature type="signal peptide" evidence="2">
    <location>
        <begin position="1"/>
        <end position="21"/>
    </location>
</feature>
<feature type="propeptide" id="PRO_0000016947" evidence="4">
    <location>
        <begin position="22"/>
        <end position="33"/>
    </location>
</feature>
<feature type="chain" id="PRO_0000016948" description="Metallo-beta-lactamase L1 type 3">
    <location>
        <begin position="34"/>
        <end position="290"/>
    </location>
</feature>
<feature type="binding site" evidence="3 5">
    <location>
        <position position="105"/>
    </location>
    <ligand>
        <name>Zn(2+)</name>
        <dbReference type="ChEBI" id="CHEBI:29105"/>
        <label>1</label>
    </ligand>
</feature>
<feature type="binding site" evidence="3 5">
    <location>
        <position position="107"/>
    </location>
    <ligand>
        <name>Zn(2+)</name>
        <dbReference type="ChEBI" id="CHEBI:29105"/>
        <label>1</label>
    </ligand>
</feature>
<feature type="binding site" evidence="3 5">
    <location>
        <position position="109"/>
    </location>
    <ligand>
        <name>Zn(2+)</name>
        <dbReference type="ChEBI" id="CHEBI:29105"/>
        <label>2</label>
    </ligand>
</feature>
<feature type="binding site" evidence="3 5">
    <location>
        <position position="110"/>
    </location>
    <ligand>
        <name>Zn(2+)</name>
        <dbReference type="ChEBI" id="CHEBI:29105"/>
        <label>2</label>
    </ligand>
</feature>
<feature type="binding site" evidence="3 5">
    <location>
        <position position="181"/>
    </location>
    <ligand>
        <name>Zn(2+)</name>
        <dbReference type="ChEBI" id="CHEBI:29105"/>
        <label>1</label>
    </ligand>
</feature>
<feature type="binding site" evidence="1">
    <location>
        <position position="205"/>
    </location>
    <ligand>
        <name>substrate</name>
    </ligand>
</feature>
<feature type="binding site" evidence="5">
    <location>
        <position position="246"/>
    </location>
    <ligand>
        <name>Zn(2+)</name>
        <dbReference type="ChEBI" id="CHEBI:29105"/>
        <label>2</label>
    </ligand>
</feature>
<feature type="disulfide bond" evidence="5">
    <location>
        <begin position="239"/>
        <end position="267"/>
    </location>
</feature>
<feature type="sequence conflict" description="In Ref. 2; AA sequence." evidence="7" ref="2">
    <original>AS</original>
    <variation>QR</variation>
    <location>
        <begin position="36"/>
        <end position="37"/>
    </location>
</feature>
<feature type="sequence conflict" description="In Ref. 2; AA sequence." evidence="7" ref="2">
    <original>Q</original>
    <variation>A</variation>
    <location>
        <position position="40"/>
    </location>
</feature>
<feature type="sequence conflict" description="In Ref. 2; AA sequence." evidence="7" ref="2">
    <original>TED</original>
    <variation>RQH</variation>
    <location>
        <begin position="56"/>
        <end position="58"/>
    </location>
</feature>
<feature type="sequence conflict" description="In Ref. 2; AA sequence." evidence="7" ref="2">
    <original>L</original>
    <variation>H</variation>
    <location>
        <position position="63"/>
    </location>
</feature>
<feature type="helix" evidence="9">
    <location>
        <begin position="36"/>
        <end position="39"/>
    </location>
</feature>
<feature type="strand" evidence="9">
    <location>
        <begin position="45"/>
        <end position="48"/>
    </location>
</feature>
<feature type="strand" evidence="9">
    <location>
        <begin position="51"/>
        <end position="53"/>
    </location>
</feature>
<feature type="strand" evidence="10">
    <location>
        <begin position="55"/>
        <end position="59"/>
    </location>
</feature>
<feature type="strand" evidence="9">
    <location>
        <begin position="62"/>
        <end position="66"/>
    </location>
</feature>
<feature type="strand" evidence="9">
    <location>
        <begin position="69"/>
        <end position="73"/>
    </location>
</feature>
<feature type="helix" evidence="9">
    <location>
        <begin position="78"/>
        <end position="80"/>
    </location>
</feature>
<feature type="helix" evidence="9">
    <location>
        <begin position="81"/>
        <end position="90"/>
    </location>
</feature>
<feature type="helix" evidence="9">
    <location>
        <begin position="95"/>
        <end position="97"/>
    </location>
</feature>
<feature type="strand" evidence="9">
    <location>
        <begin position="98"/>
        <end position="102"/>
    </location>
</feature>
<feature type="helix" evidence="9">
    <location>
        <begin position="108"/>
        <end position="111"/>
    </location>
</feature>
<feature type="helix" evidence="9">
    <location>
        <begin position="114"/>
        <end position="120"/>
    </location>
</feature>
<feature type="strand" evidence="9">
    <location>
        <begin position="124"/>
        <end position="127"/>
    </location>
</feature>
<feature type="helix" evidence="9">
    <location>
        <begin position="129"/>
        <end position="136"/>
    </location>
</feature>
<feature type="turn" evidence="9">
    <location>
        <begin position="137"/>
        <end position="139"/>
    </location>
</feature>
<feature type="turn" evidence="9">
    <location>
        <begin position="143"/>
        <end position="145"/>
    </location>
</feature>
<feature type="turn" evidence="8">
    <location>
        <begin position="147"/>
        <end position="149"/>
    </location>
</feature>
<feature type="strand" evidence="9">
    <location>
        <begin position="157"/>
        <end position="159"/>
    </location>
</feature>
<feature type="strand" evidence="9">
    <location>
        <begin position="165"/>
        <end position="168"/>
    </location>
</feature>
<feature type="strand" evidence="9">
    <location>
        <begin position="171"/>
        <end position="177"/>
    </location>
</feature>
<feature type="strand" evidence="9">
    <location>
        <begin position="180"/>
        <end position="182"/>
    </location>
</feature>
<feature type="strand" evidence="9">
    <location>
        <begin position="186"/>
        <end position="194"/>
    </location>
</feature>
<feature type="strand" evidence="9">
    <location>
        <begin position="197"/>
        <end position="203"/>
    </location>
</feature>
<feature type="helix" evidence="9">
    <location>
        <begin position="223"/>
        <end position="235"/>
    </location>
</feature>
<feature type="strand" evidence="9">
    <location>
        <begin position="240"/>
        <end position="243"/>
    </location>
</feature>
<feature type="helix" evidence="9">
    <location>
        <begin position="247"/>
        <end position="250"/>
    </location>
</feature>
<feature type="helix" evidence="9">
    <location>
        <begin position="254"/>
        <end position="259"/>
    </location>
</feature>
<feature type="turn" evidence="9">
    <location>
        <begin position="260"/>
        <end position="263"/>
    </location>
</feature>
<feature type="helix" evidence="9">
    <location>
        <begin position="267"/>
        <end position="287"/>
    </location>
</feature>
<reference key="1">
    <citation type="journal article" date="1994" name="Biochim. Biophys. Acta">
        <title>Sequence analysis of the L1 metallo-beta-lactamase from Xanthomonas maltophilia.</title>
        <authorList>
            <person name="Walsh T.R."/>
            <person name="Hall L."/>
            <person name="Assinder S.J."/>
            <person name="Nichols W.W."/>
            <person name="Cartwright S.J."/>
            <person name="Macgowan A.P."/>
            <person name="Bennett P.M."/>
        </authorList>
    </citation>
    <scope>NUCLEOTIDE SEQUENCE [GENOMIC DNA]</scope>
    <source>
        <strain>IID 1275</strain>
    </source>
</reference>
<reference key="2">
    <citation type="journal article" date="1985" name="Biochem. J.">
        <title>The production and molecular properties of the zinc beta-lactamase of Pseudomonas maltophilia IID 1275.</title>
        <authorList>
            <person name="Bicknell R."/>
            <person name="Emanuel E.L."/>
            <person name="Gagnon J."/>
            <person name="Waley S.G."/>
        </authorList>
    </citation>
    <scope>PROTEIN SEQUENCE OF 34-65</scope>
    <scope>FUNCTION</scope>
    <scope>CATALYTIC ACTIVITY</scope>
    <scope>BIOPHYSICOCHEMICAL PROPERTIES</scope>
    <scope>ACTIVITY REGULATION</scope>
    <scope>SUBUNIT</scope>
    <source>
        <strain>IID 1275</strain>
    </source>
</reference>
<reference key="3">
    <citation type="journal article" date="1998" name="J. Mol. Biol.">
        <title>The crystal structure of the L1 metallo-beta-lactamase from Stenotrophomonas maltophilia at 1.7 A resolution.</title>
        <authorList>
            <person name="Ullah J.H."/>
            <person name="Walsh T.R."/>
            <person name="Taylor I.A."/>
            <person name="Emery D.C."/>
            <person name="Verma C.S."/>
            <person name="Gamblin S.J."/>
            <person name="Spencer J."/>
        </authorList>
    </citation>
    <scope>X-RAY CRYSTALLOGRAPHY (1.70 ANGSTROMS) OF 22-290 IN COMPLEX WITH ZINC IONS</scope>
    <scope>FUNCTION</scope>
    <scope>COFACTOR</scope>
    <scope>SUBUNIT</scope>
    <scope>DISULFIDE BOND</scope>
    <scope>REACTION MECHANISM</scope>
</reference>
<reference key="4">
    <citation type="journal article" date="2008" name="J. Mol. Biol.">
        <title>Structural insights into the design of inhibitors for the L1 metallo-beta-lactamase from Stenotrophomonas maltophilia.</title>
        <authorList>
            <person name="Nauton L."/>
            <person name="Kahn R."/>
            <person name="Garau G."/>
            <person name="Hernandez J.F."/>
            <person name="Dideberg O."/>
        </authorList>
    </citation>
    <scope>X-RAY CRYSTALLOGRAPHY (1.75 ANGSTROMS) OF 22-290 IN COMPLEX WITH SUBSTRATE ANALOGS AND ZINC</scope>
    <scope>COFACTOR</scope>
    <scope>SUBUNIT</scope>
</reference>
<proteinExistence type="evidence at protein level"/>
<dbReference type="EC" id="3.5.2.6" evidence="4"/>
<dbReference type="EMBL" id="X75074">
    <property type="protein sequence ID" value="CAA52968.1"/>
    <property type="molecule type" value="Genomic_DNA"/>
</dbReference>
<dbReference type="PIR" id="S45349">
    <property type="entry name" value="S45349"/>
</dbReference>
<dbReference type="RefSeq" id="WP_304486996.1">
    <property type="nucleotide sequence ID" value="NG_228664.1"/>
</dbReference>
<dbReference type="PDB" id="1SML">
    <property type="method" value="X-ray"/>
    <property type="resolution" value="1.70 A"/>
    <property type="chains" value="A=22-290"/>
</dbReference>
<dbReference type="PDB" id="2AIO">
    <property type="method" value="X-ray"/>
    <property type="resolution" value="1.70 A"/>
    <property type="chains" value="A=22-290"/>
</dbReference>
<dbReference type="PDB" id="2FM6">
    <property type="method" value="X-ray"/>
    <property type="resolution" value="1.75 A"/>
    <property type="chains" value="A/B=22-290"/>
</dbReference>
<dbReference type="PDB" id="2FU6">
    <property type="method" value="X-ray"/>
    <property type="resolution" value="2.05 A"/>
    <property type="chains" value="A/B=22-290"/>
</dbReference>
<dbReference type="PDB" id="2FU7">
    <property type="method" value="X-ray"/>
    <property type="resolution" value="1.85 A"/>
    <property type="chains" value="A/B=22-290"/>
</dbReference>
<dbReference type="PDB" id="2FU8">
    <property type="method" value="X-ray"/>
    <property type="resolution" value="1.80 A"/>
    <property type="chains" value="A/B=22-290"/>
</dbReference>
<dbReference type="PDB" id="2FU9">
    <property type="method" value="X-ray"/>
    <property type="resolution" value="1.80 A"/>
    <property type="chains" value="A/B=22-290"/>
</dbReference>
<dbReference type="PDB" id="2GFJ">
    <property type="method" value="X-ray"/>
    <property type="resolution" value="1.80 A"/>
    <property type="chains" value="A/B=22-290"/>
</dbReference>
<dbReference type="PDB" id="2GFK">
    <property type="method" value="X-ray"/>
    <property type="resolution" value="1.90 A"/>
    <property type="chains" value="A/B=22-290"/>
</dbReference>
<dbReference type="PDB" id="2H6A">
    <property type="method" value="X-ray"/>
    <property type="resolution" value="1.80 A"/>
    <property type="chains" value="A/B=22-290"/>
</dbReference>
<dbReference type="PDB" id="2HB9">
    <property type="method" value="X-ray"/>
    <property type="resolution" value="1.75 A"/>
    <property type="chains" value="A=22-290"/>
</dbReference>
<dbReference type="PDB" id="2QDT">
    <property type="method" value="X-ray"/>
    <property type="resolution" value="2.00 A"/>
    <property type="chains" value="A=22-290"/>
</dbReference>
<dbReference type="PDB" id="2QIN">
    <property type="method" value="X-ray"/>
    <property type="resolution" value="1.76 A"/>
    <property type="chains" value="A/B/C/D=22-290"/>
</dbReference>
<dbReference type="PDB" id="2QJS">
    <property type="method" value="X-ray"/>
    <property type="resolution" value="2.25 A"/>
    <property type="chains" value="A/B/C/D=22-290"/>
</dbReference>
<dbReference type="PDB" id="5DPX">
    <property type="method" value="X-ray"/>
    <property type="resolution" value="1.85 A"/>
    <property type="chains" value="A/B=22-290"/>
</dbReference>
<dbReference type="PDB" id="5EVB">
    <property type="method" value="X-ray"/>
    <property type="resolution" value="1.84 A"/>
    <property type="chains" value="A=22-290"/>
</dbReference>
<dbReference type="PDB" id="5EVD">
    <property type="method" value="X-ray"/>
    <property type="resolution" value="1.80 A"/>
    <property type="chains" value="A=22-290"/>
</dbReference>
<dbReference type="PDB" id="5EVK">
    <property type="method" value="X-ray"/>
    <property type="resolution" value="1.63 A"/>
    <property type="chains" value="A=22-290"/>
</dbReference>
<dbReference type="PDB" id="5HH5">
    <property type="method" value="X-ray"/>
    <property type="resolution" value="1.80 A"/>
    <property type="chains" value="A=22-290"/>
</dbReference>
<dbReference type="PDB" id="5HH6">
    <property type="method" value="X-ray"/>
    <property type="resolution" value="1.80 A"/>
    <property type="chains" value="A=22-290"/>
</dbReference>
<dbReference type="PDB" id="7A63">
    <property type="method" value="X-ray"/>
    <property type="resolution" value="1.57 A"/>
    <property type="chains" value="A=22-290"/>
</dbReference>
<dbReference type="PDB" id="7AFZ">
    <property type="method" value="X-ray"/>
    <property type="resolution" value="1.50 A"/>
    <property type="chains" value="A=22-290"/>
</dbReference>
<dbReference type="PDB" id="7BJ8">
    <property type="method" value="X-ray"/>
    <property type="resolution" value="1.69 A"/>
    <property type="chains" value="A=22-290"/>
</dbReference>
<dbReference type="PDB" id="7O0O">
    <property type="method" value="X-ray"/>
    <property type="resolution" value="1.45 A"/>
    <property type="chains" value="A=22-290"/>
</dbReference>
<dbReference type="PDB" id="7ZO2">
    <property type="method" value="X-ray"/>
    <property type="resolution" value="1.49 A"/>
    <property type="chains" value="A=22-290"/>
</dbReference>
<dbReference type="PDB" id="7ZO3">
    <property type="method" value="X-ray"/>
    <property type="resolution" value="1.43 A"/>
    <property type="chains" value="A=22-290"/>
</dbReference>
<dbReference type="PDB" id="7ZO4">
    <property type="method" value="X-ray"/>
    <property type="resolution" value="1.43 A"/>
    <property type="chains" value="A=22-290"/>
</dbReference>
<dbReference type="PDB" id="7ZO5">
    <property type="method" value="X-ray"/>
    <property type="resolution" value="1.43 A"/>
    <property type="chains" value="A=22-290"/>
</dbReference>
<dbReference type="PDB" id="7ZO6">
    <property type="method" value="X-ray"/>
    <property type="resolution" value="1.61 A"/>
    <property type="chains" value="A=22-290"/>
</dbReference>
<dbReference type="PDB" id="7ZO7">
    <property type="method" value="X-ray"/>
    <property type="resolution" value="1.63 A"/>
    <property type="chains" value="A=22-290"/>
</dbReference>
<dbReference type="PDB" id="8HXE">
    <property type="method" value="X-ray"/>
    <property type="resolution" value="2.38 A"/>
    <property type="chains" value="A/B=23-288"/>
</dbReference>
<dbReference type="PDBsum" id="1SML"/>
<dbReference type="PDBsum" id="2AIO"/>
<dbReference type="PDBsum" id="2FM6"/>
<dbReference type="PDBsum" id="2FU6"/>
<dbReference type="PDBsum" id="2FU7"/>
<dbReference type="PDBsum" id="2FU8"/>
<dbReference type="PDBsum" id="2FU9"/>
<dbReference type="PDBsum" id="2GFJ"/>
<dbReference type="PDBsum" id="2GFK"/>
<dbReference type="PDBsum" id="2H6A"/>
<dbReference type="PDBsum" id="2HB9"/>
<dbReference type="PDBsum" id="2QDT"/>
<dbReference type="PDBsum" id="2QIN"/>
<dbReference type="PDBsum" id="2QJS"/>
<dbReference type="PDBsum" id="5DPX"/>
<dbReference type="PDBsum" id="5EVB"/>
<dbReference type="PDBsum" id="5EVD"/>
<dbReference type="PDBsum" id="5EVK"/>
<dbReference type="PDBsum" id="5HH5"/>
<dbReference type="PDBsum" id="5HH6"/>
<dbReference type="PDBsum" id="7A63"/>
<dbReference type="PDBsum" id="7AFZ"/>
<dbReference type="PDBsum" id="7BJ8"/>
<dbReference type="PDBsum" id="7O0O"/>
<dbReference type="PDBsum" id="7ZO2"/>
<dbReference type="PDBsum" id="7ZO3"/>
<dbReference type="PDBsum" id="7ZO4"/>
<dbReference type="PDBsum" id="7ZO5"/>
<dbReference type="PDBsum" id="7ZO6"/>
<dbReference type="PDBsum" id="7ZO7"/>
<dbReference type="PDBsum" id="8HXE"/>
<dbReference type="SMR" id="P52700"/>
<dbReference type="BindingDB" id="P52700"/>
<dbReference type="ChEMBL" id="CHEMBL3326"/>
<dbReference type="DrugBank" id="DB02365">
    <property type="generic name" value="1,10-Phenanthroline"/>
</dbReference>
<dbReference type="DrugBank" id="DB08702">
    <property type="generic name" value="2,5-DIPHENYLFURAN-3,4-DICARBOXYLIC ACID"/>
</dbReference>
<dbReference type="DrugBank" id="DB08069">
    <property type="generic name" value="4-AMINO-5-(2-METHYLPHENYL)-2,4-DIHYDRO-3H-1,2,4-TRIAZOLE-3-THIONE"/>
</dbReference>
<dbReference type="DrugBank" id="DB02032">
    <property type="generic name" value="Epicaptopril"/>
</dbReference>
<dbReference type="DrugBank" id="DB04740">
    <property type="generic name" value="Moxalactam (hydrolyzed)"/>
</dbReference>
<dbReference type="DrugBank" id="DB07939">
    <property type="generic name" value="N-(3-MERCAPTOPROPANOYL)-D-ALANINE"/>
</dbReference>
<dbReference type="DrugBank" id="DB08199">
    <property type="generic name" value="N-[(BENZYLOXY)CARBONYL]-L-CYSTEINYLGLYCINE"/>
</dbReference>
<dbReference type="BRENDA" id="3.5.2.6">
    <property type="organism ID" value="5134"/>
</dbReference>
<dbReference type="SABIO-RK" id="P52700"/>
<dbReference type="EvolutionaryTrace" id="P52700"/>
<dbReference type="GO" id="GO:0042597">
    <property type="term" value="C:periplasmic space"/>
    <property type="evidence" value="ECO:0007669"/>
    <property type="project" value="UniProtKB-SubCell"/>
</dbReference>
<dbReference type="GO" id="GO:0008800">
    <property type="term" value="F:beta-lactamase activity"/>
    <property type="evidence" value="ECO:0000314"/>
    <property type="project" value="UniProtKB"/>
</dbReference>
<dbReference type="GO" id="GO:0008270">
    <property type="term" value="F:zinc ion binding"/>
    <property type="evidence" value="ECO:0000314"/>
    <property type="project" value="UniProtKB"/>
</dbReference>
<dbReference type="GO" id="GO:0017001">
    <property type="term" value="P:antibiotic catabolic process"/>
    <property type="evidence" value="ECO:0000314"/>
    <property type="project" value="UniProtKB"/>
</dbReference>
<dbReference type="GO" id="GO:0046677">
    <property type="term" value="P:response to antibiotic"/>
    <property type="evidence" value="ECO:0007669"/>
    <property type="project" value="UniProtKB-KW"/>
</dbReference>
<dbReference type="CDD" id="cd16289">
    <property type="entry name" value="L1_POM-1-like_MBL-B3"/>
    <property type="match status" value="1"/>
</dbReference>
<dbReference type="FunFam" id="3.60.15.10:FF:000118">
    <property type="entry name" value="Metallo-beta-lactamase L1 type 3"/>
    <property type="match status" value="1"/>
</dbReference>
<dbReference type="Gene3D" id="3.60.15.10">
    <property type="entry name" value="Ribonuclease Z/Hydroxyacylglutathione hydrolase-like"/>
    <property type="match status" value="1"/>
</dbReference>
<dbReference type="InterPro" id="IPR001018">
    <property type="entry name" value="Beta-lactamase_class-B_CS"/>
</dbReference>
<dbReference type="InterPro" id="IPR001279">
    <property type="entry name" value="Metallo-B-lactamas"/>
</dbReference>
<dbReference type="InterPro" id="IPR050855">
    <property type="entry name" value="NDM-1-like"/>
</dbReference>
<dbReference type="InterPro" id="IPR036866">
    <property type="entry name" value="RibonucZ/Hydroxyglut_hydro"/>
</dbReference>
<dbReference type="NCBIfam" id="NF012229">
    <property type="entry name" value="bla_class_B_core"/>
    <property type="match status" value="1"/>
</dbReference>
<dbReference type="NCBIfam" id="NF033105">
    <property type="entry name" value="bla_subclass_B3"/>
    <property type="match status" value="1"/>
</dbReference>
<dbReference type="NCBIfam" id="NF033106">
    <property type="entry name" value="blaL1"/>
    <property type="match status" value="1"/>
</dbReference>
<dbReference type="PANTHER" id="PTHR42951">
    <property type="entry name" value="METALLO-BETA-LACTAMASE DOMAIN-CONTAINING"/>
    <property type="match status" value="1"/>
</dbReference>
<dbReference type="PANTHER" id="PTHR42951:SF17">
    <property type="entry name" value="METALLO-BETA-LACTAMASE DOMAIN-CONTAINING PROTEIN"/>
    <property type="match status" value="1"/>
</dbReference>
<dbReference type="Pfam" id="PF00753">
    <property type="entry name" value="Lactamase_B"/>
    <property type="match status" value="1"/>
</dbReference>
<dbReference type="SMART" id="SM00849">
    <property type="entry name" value="Lactamase_B"/>
    <property type="match status" value="1"/>
</dbReference>
<dbReference type="SUPFAM" id="SSF56281">
    <property type="entry name" value="Metallo-hydrolase/oxidoreductase"/>
    <property type="match status" value="1"/>
</dbReference>
<dbReference type="PROSITE" id="PS00743">
    <property type="entry name" value="BETA_LACTAMASE_B_1"/>
    <property type="match status" value="1"/>
</dbReference>
<protein>
    <recommendedName>
        <fullName evidence="7">Metallo-beta-lactamase L1 type 3</fullName>
        <ecNumber evidence="4">3.5.2.6</ecNumber>
    </recommendedName>
    <alternativeName>
        <fullName evidence="7">B3 metallo-beta-lactamase</fullName>
    </alternativeName>
    <alternativeName>
        <fullName evidence="6">Beta-lactamase type III</fullName>
    </alternativeName>
    <alternativeName>
        <fullName evidence="6">Metallo-beta-lactamase L1 type III</fullName>
    </alternativeName>
    <alternativeName>
        <fullName evidence="6">Penicillinase</fullName>
    </alternativeName>
</protein>
<sequence length="290" mass="30801">MRSTLLAFALAVALPAAHTSAAEVPLPQLRAYTVDASWLQPMAPLQIADHTWQIGTEDLTALLVQTPDGAVLLDGGMPQMASHLLDNMKARGVTPRDLRLILLSHAHADHAGPVAELKRRTGAKVAANAESAVLLARGGSDDLHFGDGITYPPANADRIVMDGEVITVGGIVFTAHFMAGHTPGSTAWTWTDTRNGKPVRIAYADSLSAPGYQLQGNPRYPHLIEDYRRSFATVRALPCDVLLTPHPGASNWDYAAGARAGAKALTCKAYADAAEQKFDGQLAKETAGAR</sequence>
<accession>P52700</accession>
<evidence type="ECO:0000250" key="1">
    <source>
        <dbReference type="UniProtKB" id="P25910"/>
    </source>
</evidence>
<evidence type="ECO:0000255" key="2"/>
<evidence type="ECO:0000269" key="3">
    <source>
    </source>
</evidence>
<evidence type="ECO:0000269" key="4">
    <source>
    </source>
</evidence>
<evidence type="ECO:0000269" key="5">
    <source>
    </source>
</evidence>
<evidence type="ECO:0000303" key="6">
    <source>
    </source>
</evidence>
<evidence type="ECO:0000305" key="7"/>
<evidence type="ECO:0007829" key="8">
    <source>
        <dbReference type="PDB" id="7AFZ"/>
    </source>
</evidence>
<evidence type="ECO:0007829" key="9">
    <source>
        <dbReference type="PDB" id="7ZO3"/>
    </source>
</evidence>
<evidence type="ECO:0007829" key="10">
    <source>
        <dbReference type="PDB" id="7ZO4"/>
    </source>
</evidence>
<name>BLA1_STEMA</name>
<comment type="function">
    <text evidence="4 5">Confers resistance to the different beta-lactams antibiotics (penicillin, cephalosporin and carbapenem) via the hydrolysis of the beta-lactam ring.</text>
</comment>
<comment type="catalytic activity">
    <reaction evidence="4">
        <text>a beta-lactam + H2O = a substituted beta-amino acid</text>
        <dbReference type="Rhea" id="RHEA:20401"/>
        <dbReference type="ChEBI" id="CHEBI:15377"/>
        <dbReference type="ChEBI" id="CHEBI:35627"/>
        <dbReference type="ChEBI" id="CHEBI:140347"/>
        <dbReference type="EC" id="3.5.2.6"/>
    </reaction>
</comment>
<comment type="cofactor">
    <cofactor evidence="3 5">
        <name>Zn(2+)</name>
        <dbReference type="ChEBI" id="CHEBI:29105"/>
    </cofactor>
    <text evidence="3 5">Binds 2 Zn(2+) ions per subunit.</text>
</comment>
<comment type="activity regulation">
    <text evidence="4">Inhibited by Hg(2+) or Cu(2+), and by chelating agents such as EDTA and O-phenanthroline. Reduced enzymatic activity in presence of cobalt, nickel, cadmium, and manganese.</text>
</comment>
<comment type="biophysicochemical properties">
    <phDependence>
        <text evidence="4">Unstable below pH 8, unless zinc is present.</text>
    </phDependence>
</comment>
<comment type="subunit">
    <text evidence="3 4 5">Homotetramer.</text>
</comment>
<comment type="subcellular location">
    <subcellularLocation>
        <location evidence="7">Periplasm</location>
    </subcellularLocation>
</comment>
<comment type="similarity">
    <text evidence="7">Belongs to the metallo-beta-lactamase superfamily. Class-B beta-lactamase family.</text>
</comment>
<keyword id="KW-0002">3D-structure</keyword>
<keyword id="KW-0046">Antibiotic resistance</keyword>
<keyword id="KW-0903">Direct protein sequencing</keyword>
<keyword id="KW-1015">Disulfide bond</keyword>
<keyword id="KW-0378">Hydrolase</keyword>
<keyword id="KW-0479">Metal-binding</keyword>
<keyword id="KW-0574">Periplasm</keyword>
<keyword id="KW-0732">Signal</keyword>
<keyword id="KW-0862">Zinc</keyword>
<organism>
    <name type="scientific">Stenotrophomonas maltophilia</name>
    <name type="common">Pseudomonas maltophilia</name>
    <name type="synonym">Xanthomonas maltophilia</name>
    <dbReference type="NCBI Taxonomy" id="40324"/>
    <lineage>
        <taxon>Bacteria</taxon>
        <taxon>Pseudomonadati</taxon>
        <taxon>Pseudomonadota</taxon>
        <taxon>Gammaproteobacteria</taxon>
        <taxon>Lysobacterales</taxon>
        <taxon>Lysobacteraceae</taxon>
        <taxon>Stenotrophomonas</taxon>
        <taxon>Stenotrophomonas maltophilia group</taxon>
    </lineage>
</organism>